<keyword id="KW-0020">Allergen</keyword>
<keyword id="KW-1015">Disulfide bond</keyword>
<keyword id="KW-0325">Glycoprotein</keyword>
<keyword id="KW-0568">Pathogenesis-related protein</keyword>
<keyword id="KW-0611">Plant defense</keyword>
<keyword id="KW-0732">Signal</keyword>
<keyword id="KW-0346">Stress response</keyword>
<comment type="function">
    <text evidence="8">May be involved in disease resistance.</text>
</comment>
<comment type="tissue specificity">
    <text evidence="4">Mainly expressed in male and female strobili, and, at lower levels, in roots of seedlings and saplings.</text>
</comment>
<comment type="developmental stage">
    <text evidence="4">Mostly abundant in mature female strobili, with lower expression in developing female strobili and in mature male strobili.</text>
</comment>
<comment type="induction">
    <text evidence="4">Induced by ethylene (ethephon), salt stress and salicylic acid (SA) (PubMed:16203714). Strongly induced by arachidonic acid (PubMed:16203714).</text>
</comment>
<comment type="allergen">
    <text evidence="5 6 9">Causes an oral allergy syndrome (OAS) reaction in human and animals (PubMed:17441795, PubMed:22749702, PubMed:26433527). Binds to IgE and induces the release of histamine from leukocytes of allergic patients (PubMed:17441795). Binds to IgE from canine atopic dermatitis (CAD) sensitive dogs (PubMed:22749702).</text>
</comment>
<comment type="similarity">
    <text evidence="3">Belongs to the thaumatin family.</text>
</comment>
<sequence>MARAILWVLLTVMAVSLLLHAGVEGVNFDIENQCPYTVWAAGTPFGGGIELKRGQSWRVNVPGGARGRFWGRTGCSFDGNGRGRCNTGDCGGLLNCQGSGGVPSTLLEYALNQYQNLDFYDISLVDGFNLRMTVVLSNTNCKRIACNSDINSKCPGELKVVDGCRSACAAFNTPAYCCTGSFLDNCPPTGYSQFFKRECPLAYSYAKDDPTSTFTCPGGSDYKIIFCGNGDSQSNSTSTSSGSLYAVE</sequence>
<name>CRJ34_CRYJA</name>
<reference key="1">
    <citation type="journal article" date="2006" name="Tree Physiol.">
        <title>Characterization of genes for novel thaumatin-like proteins in Cryptomeria japonica.</title>
        <authorList>
            <person name="Futamura N."/>
            <person name="Tani N."/>
            <person name="Tsumura Y."/>
            <person name="Nakajima N."/>
            <person name="Sakaguchi M."/>
            <person name="Shinohara K."/>
        </authorList>
    </citation>
    <scope>NUCLEOTIDE SEQUENCE [MRNA]</scope>
    <scope>TISSUE SPECIFICITY</scope>
    <scope>DEVELOPMENTAL STAGE</scope>
    <scope>INDUCTION BY ETHYLENE; SALT STRESS; ARACHIDONIC ACID AND SALICYLIC ACID</scope>
    <scope>GENE FAMILY</scope>
    <scope>NOMENCLATURE</scope>
    <source>
        <tissue>Pollen</tissue>
    </source>
</reference>
<reference key="2">
    <citation type="journal article" date="2007" name="Allergy">
        <title>Isolation and characterization of native Cry j 3 from Japanese cedar (Cryptomeria japonica) pollen.</title>
        <authorList>
            <person name="Fujimura T."/>
            <person name="Futamura N."/>
            <person name="Midoro-Horiuti T."/>
            <person name="Togawa A."/>
            <person name="Goldblum R.M."/>
            <person name="Yasueda H."/>
            <person name="Saito A."/>
            <person name="Shinohara K."/>
            <person name="Masuda K."/>
            <person name="Kurata K."/>
            <person name="Sakaguchi M."/>
        </authorList>
    </citation>
    <scope>ALLERGEN</scope>
    <source>
        <tissue>Flower</tissue>
    </source>
</reference>
<reference key="3">
    <citation type="journal article" date="2010" name="Plant Cell Rep.">
        <title>The superfamily of thaumatin-like proteins: its origin, evolution, and expression towards biological function.</title>
        <authorList>
            <person name="Liu J.-J."/>
            <person name="Sturrock R."/>
            <person name="Ekramoddoullah A.K.M."/>
        </authorList>
    </citation>
    <scope>REVIEW ON THAUMATIN-LIKE PROTEINS</scope>
</reference>
<reference key="4">
    <citation type="journal article" date="2012" name="Vet. Immunol. Immunopathol.">
        <title>IgE reactivity to a Cry j 3, an allergen of Japanese cedar (Cryptomeria japonica) pollen in dogs with canine atopic dermatitis.</title>
        <authorList>
            <person name="Kubota S."/>
            <person name="Miyaji K."/>
            <person name="Shimo Y."/>
            <person name="Shimakura H."/>
            <person name="Takase Y."/>
            <person name="Okamoto N."/>
            <person name="Kiuchi A."/>
            <person name="Fujimura M."/>
            <person name="Fujimura T."/>
            <person name="DeBoer D.J."/>
            <person name="Tsukui T."/>
            <person name="Sakaguchi M."/>
        </authorList>
    </citation>
    <scope>ALLERGEN</scope>
    <source>
        <tissue>Pollen</tissue>
    </source>
</reference>
<reference key="5">
    <citation type="journal article" date="2015" name="Allergol. Int.">
        <title>Spectrum of allergens for Japanese cedar pollinosis and impact of component-resolved diagnosis on allergen-specific immunotherapy.</title>
        <authorList>
            <person name="Fujimura T."/>
            <person name="Kawamoto S."/>
        </authorList>
    </citation>
    <scope>REVIEW ON ALLERGEN</scope>
</reference>
<feature type="signal peptide" evidence="1">
    <location>
        <begin position="1"/>
        <end position="25"/>
    </location>
</feature>
<feature type="chain" id="PRO_5004254470" description="Pathogenesis-related thaumatin-like protein 3.4">
    <location>
        <begin position="26"/>
        <end position="248"/>
    </location>
</feature>
<feature type="glycosylation site" description="N-linked (GlcNAc...) asparagine" evidence="2">
    <location>
        <position position="235"/>
    </location>
</feature>
<feature type="disulfide bond" evidence="3">
    <location>
        <begin position="34"/>
        <end position="227"/>
    </location>
</feature>
<feature type="disulfide bond" evidence="3">
    <location>
        <begin position="75"/>
        <end position="85"/>
    </location>
</feature>
<feature type="disulfide bond" evidence="3">
    <location>
        <begin position="90"/>
        <end position="96"/>
    </location>
</feature>
<feature type="disulfide bond" evidence="3">
    <location>
        <begin position="141"/>
        <end position="216"/>
    </location>
</feature>
<feature type="disulfide bond" evidence="3">
    <location>
        <begin position="146"/>
        <end position="199"/>
    </location>
</feature>
<feature type="disulfide bond" evidence="3">
    <location>
        <begin position="154"/>
        <end position="164"/>
    </location>
</feature>
<feature type="disulfide bond" evidence="3">
    <location>
        <begin position="168"/>
        <end position="177"/>
    </location>
</feature>
<feature type="disulfide bond" evidence="3">
    <location>
        <begin position="178"/>
        <end position="186"/>
    </location>
</feature>
<evidence type="ECO:0000255" key="1"/>
<evidence type="ECO:0000255" key="2">
    <source>
        <dbReference type="PROSITE-ProRule" id="PRU00498"/>
    </source>
</evidence>
<evidence type="ECO:0000255" key="3">
    <source>
        <dbReference type="PROSITE-ProRule" id="PRU00699"/>
    </source>
</evidence>
<evidence type="ECO:0000269" key="4">
    <source>
    </source>
</evidence>
<evidence type="ECO:0000269" key="5">
    <source>
    </source>
</evidence>
<evidence type="ECO:0000269" key="6">
    <source>
    </source>
</evidence>
<evidence type="ECO:0000303" key="7">
    <source>
    </source>
</evidence>
<evidence type="ECO:0000303" key="8">
    <source>
    </source>
</evidence>
<evidence type="ECO:0000303" key="9">
    <source>
    </source>
</evidence>
<evidence type="ECO:0000305" key="10"/>
<accession>Q5DWG2</accession>
<proteinExistence type="evidence at protein level"/>
<protein>
    <recommendedName>
        <fullName evidence="10">Pathogenesis-related thaumatin-like protein 3.4</fullName>
    </recommendedName>
    <allergenName evidence="7">Cry j 3.4</allergenName>
</protein>
<dbReference type="EMBL" id="AB186384">
    <property type="protein sequence ID" value="BAD90813.1"/>
    <property type="molecule type" value="mRNA"/>
</dbReference>
<dbReference type="RefSeq" id="NP_001414804.1">
    <property type="nucleotide sequence ID" value="NM_001427875.1"/>
</dbReference>
<dbReference type="SMR" id="Q5DWG2"/>
<dbReference type="Allergome" id="805">
    <property type="allergen name" value="Cry j 3"/>
</dbReference>
<dbReference type="GeneID" id="131066828"/>
<dbReference type="OrthoDB" id="430315at2759"/>
<dbReference type="GO" id="GO:0006952">
    <property type="term" value="P:defense response"/>
    <property type="evidence" value="ECO:0007669"/>
    <property type="project" value="UniProtKB-KW"/>
</dbReference>
<dbReference type="GO" id="GO:1904550">
    <property type="term" value="P:response to arachidonate"/>
    <property type="evidence" value="ECO:0000270"/>
    <property type="project" value="UniProtKB"/>
</dbReference>
<dbReference type="GO" id="GO:0009723">
    <property type="term" value="P:response to ethylene"/>
    <property type="evidence" value="ECO:0000270"/>
    <property type="project" value="UniProtKB"/>
</dbReference>
<dbReference type="GO" id="GO:0009751">
    <property type="term" value="P:response to salicylic acid"/>
    <property type="evidence" value="ECO:0000270"/>
    <property type="project" value="UniProtKB"/>
</dbReference>
<dbReference type="GO" id="GO:0009651">
    <property type="term" value="P:response to salt stress"/>
    <property type="evidence" value="ECO:0000270"/>
    <property type="project" value="UniProtKB"/>
</dbReference>
<dbReference type="CDD" id="cd09218">
    <property type="entry name" value="TLP-PA"/>
    <property type="match status" value="1"/>
</dbReference>
<dbReference type="FunFam" id="2.60.110.10:FF:000003">
    <property type="entry name" value="Thaumatin I"/>
    <property type="match status" value="1"/>
</dbReference>
<dbReference type="Gene3D" id="2.60.110.10">
    <property type="entry name" value="Thaumatin"/>
    <property type="match status" value="1"/>
</dbReference>
<dbReference type="InterPro" id="IPR037176">
    <property type="entry name" value="Osmotin/thaumatin-like_sf"/>
</dbReference>
<dbReference type="InterPro" id="IPR001938">
    <property type="entry name" value="Thaumatin"/>
</dbReference>
<dbReference type="InterPro" id="IPR017949">
    <property type="entry name" value="Thaumatin_CS"/>
</dbReference>
<dbReference type="PANTHER" id="PTHR31048">
    <property type="entry name" value="OS03G0233200 PROTEIN"/>
    <property type="match status" value="1"/>
</dbReference>
<dbReference type="Pfam" id="PF00314">
    <property type="entry name" value="Thaumatin"/>
    <property type="match status" value="1"/>
</dbReference>
<dbReference type="PIRSF" id="PIRSF002703">
    <property type="entry name" value="Thaumatin"/>
    <property type="match status" value="1"/>
</dbReference>
<dbReference type="PRINTS" id="PR00347">
    <property type="entry name" value="THAUMATIN"/>
</dbReference>
<dbReference type="SMART" id="SM00205">
    <property type="entry name" value="THN"/>
    <property type="match status" value="1"/>
</dbReference>
<dbReference type="SUPFAM" id="SSF49870">
    <property type="entry name" value="Osmotin, thaumatin-like protein"/>
    <property type="match status" value="1"/>
</dbReference>
<dbReference type="PROSITE" id="PS00316">
    <property type="entry name" value="THAUMATIN_1"/>
    <property type="match status" value="1"/>
</dbReference>
<dbReference type="PROSITE" id="PS51367">
    <property type="entry name" value="THAUMATIN_2"/>
    <property type="match status" value="1"/>
</dbReference>
<organism>
    <name type="scientific">Cryptomeria japonica</name>
    <name type="common">Japanese cedar</name>
    <name type="synonym">Cupressus japonica</name>
    <dbReference type="NCBI Taxonomy" id="3369"/>
    <lineage>
        <taxon>Eukaryota</taxon>
        <taxon>Viridiplantae</taxon>
        <taxon>Streptophyta</taxon>
        <taxon>Embryophyta</taxon>
        <taxon>Tracheophyta</taxon>
        <taxon>Spermatophyta</taxon>
        <taxon>Pinopsida</taxon>
        <taxon>Pinidae</taxon>
        <taxon>Conifers II</taxon>
        <taxon>Cupressales</taxon>
        <taxon>Cupressaceae</taxon>
        <taxon>Cryptomeria</taxon>
    </lineage>
</organism>